<organism>
    <name type="scientific">Treponema denticola (strain ATCC 35405 / DSM 14222 / CIP 103919 / JCM 8153 / KCTC 15104)</name>
    <dbReference type="NCBI Taxonomy" id="243275"/>
    <lineage>
        <taxon>Bacteria</taxon>
        <taxon>Pseudomonadati</taxon>
        <taxon>Spirochaetota</taxon>
        <taxon>Spirochaetia</taxon>
        <taxon>Spirochaetales</taxon>
        <taxon>Treponemataceae</taxon>
        <taxon>Treponema</taxon>
    </lineage>
</organism>
<sequence>MSEWDYKIFWDEAVNQFKEELAFSIFSMWFLPSKYEKSTENTVYLSVPSKFFRDQMIHNYKNGIEKKLFELSGKKISIDFIIKPNTSEDLSKAENEGGNDKKEDAAKPSSAESKKKSVKTEGGRGQHPDLRPEYNFEDFVVGPNNNFGVNAAIAVSTNPGSAYNPFLIYGGVGLGKTHLMQAIGNKIWDTTKLKVIYVTAENFTNEFVECVQKKMMPAFKSKYRKADVLLIDDIHFFQGKVETQEELFHTFNELYEKNKQIVFTCDRPPAELKNLSQRLKSRFERGLNVDLQTPAYEIRYAILLKKMEKHSTKIPNEFIDMVAKNVSSNVRDLEAALTKLIAYTELTKKTMDEATAKNLLRDIFGSTRQRNVTIDLIQRTVADYFSISISDIKSKKRTKSFSFPRQIAMFLCREMTECSTTELGNDFGGRDHTTILHGCNKIEEQIAADPSLEKIIHELRNTIKENTNK</sequence>
<gene>
    <name evidence="1" type="primary">dnaA</name>
    <name type="ordered locus">TDE_0001</name>
</gene>
<proteinExistence type="evidence at transcript level"/>
<protein>
    <recommendedName>
        <fullName evidence="1">Chromosomal replication initiator protein DnaA</fullName>
    </recommendedName>
</protein>
<name>DNAA_TREDE</name>
<evidence type="ECO:0000255" key="1">
    <source>
        <dbReference type="HAMAP-Rule" id="MF_00377"/>
    </source>
</evidence>
<evidence type="ECO:0000256" key="2">
    <source>
        <dbReference type="SAM" id="MobiDB-lite"/>
    </source>
</evidence>
<evidence type="ECO:0000269" key="3">
    <source>
    </source>
</evidence>
<evidence type="ECO:0000305" key="4"/>
<comment type="function">
    <text evidence="1">Plays an essential role in the initiation and regulation of chromosomal replication. ATP-DnaA binds to the origin of replication (oriC) to initiate formation of the DNA replication initiation complex once per cell cycle. Binds the DnaA box (a 9 base pair repeat at the origin) and separates the double-stranded (ds)DNA. Forms a right-handed helical filament on oriC DNA; dsDNA binds to the exterior of the filament while single-stranded (ss)DNA is stabiized in the filament's interior. The ATP-DnaA-oriC complex binds and stabilizes one strand of the AT-rich DNA unwinding element (DUE), permitting loading of DNA polymerase. After initiation quickly degrades to an ADP-DnaA complex that is not apt for DNA replication. Binds acidic phospholipids.</text>
</comment>
<comment type="subunit">
    <text evidence="1">Oligomerizes as a right-handed, spiral filament on DNA at oriC.</text>
</comment>
<comment type="subcellular location">
    <subcellularLocation>
        <location evidence="1">Cytoplasm</location>
    </subcellularLocation>
</comment>
<comment type="induction">
    <text evidence="3">Constitutively expressed, part of the dnaA-dnaE (TDE_2786) operon.</text>
</comment>
<comment type="domain">
    <text evidence="1">Domain I is involved in oligomerization and binding regulators, domain II is flexibile and of varying length in different bacteria, domain III forms the AAA+ region, while domain IV binds dsDNA.</text>
</comment>
<comment type="similarity">
    <text evidence="1 4">Belongs to the DnaA family.</text>
</comment>
<reference key="1">
    <citation type="journal article" date="2000" name="Gene">
        <title>Molecular characterization of the gyrB region of the oral spirochete, Treponema denticola.</title>
        <authorList>
            <person name="Greene S.R."/>
            <person name="Stamm L.V."/>
        </authorList>
    </citation>
    <scope>NUCLEOTIDE SEQUENCE [GENOMIC DNA]</scope>
    <scope>OPERON STRUCTURE</scope>
    <source>
        <strain>ATCC 35405 / DSM 14222 / CIP 103919 / JCM 8153 / KCTC 15104</strain>
    </source>
</reference>
<reference key="2">
    <citation type="journal article" date="2004" name="Proc. Natl. Acad. Sci. U.S.A.">
        <title>Comparison of the genome of the oral pathogen Treponema denticola with other spirochete genomes.</title>
        <authorList>
            <person name="Seshadri R."/>
            <person name="Myers G.S.A."/>
            <person name="Tettelin H."/>
            <person name="Eisen J.A."/>
            <person name="Heidelberg J.F."/>
            <person name="Dodson R.J."/>
            <person name="Davidsen T.M."/>
            <person name="DeBoy R.T."/>
            <person name="Fouts D.E."/>
            <person name="Haft D.H."/>
            <person name="Selengut J."/>
            <person name="Ren Q."/>
            <person name="Brinkac L.M."/>
            <person name="Madupu R."/>
            <person name="Kolonay J.F."/>
            <person name="Durkin S.A."/>
            <person name="Daugherty S.C."/>
            <person name="Shetty J."/>
            <person name="Shvartsbeyn A."/>
            <person name="Gebregeorgis E."/>
            <person name="Geer K."/>
            <person name="Tsegaye G."/>
            <person name="Malek J.A."/>
            <person name="Ayodeji B."/>
            <person name="Shatsman S."/>
            <person name="McLeod M.P."/>
            <person name="Smajs D."/>
            <person name="Howell J.K."/>
            <person name="Pal S."/>
            <person name="Amin A."/>
            <person name="Vashisth P."/>
            <person name="McNeill T.Z."/>
            <person name="Xiang Q."/>
            <person name="Sodergren E."/>
            <person name="Baca E."/>
            <person name="Weinstock G.M."/>
            <person name="Norris S.J."/>
            <person name="Fraser C.M."/>
            <person name="Paulsen I.T."/>
        </authorList>
    </citation>
    <scope>NUCLEOTIDE SEQUENCE [LARGE SCALE GENOMIC DNA]</scope>
    <source>
        <strain>ATCC 35405 / DSM 14222 / CIP 103919 / JCM 8153 / KCTC 15104</strain>
    </source>
</reference>
<dbReference type="EMBL" id="AF083949">
    <property type="protein sequence ID" value="AAC62071.1"/>
    <property type="molecule type" value="Genomic_DNA"/>
</dbReference>
<dbReference type="EMBL" id="AE017226">
    <property type="protein sequence ID" value="AAS10499.1"/>
    <property type="molecule type" value="Genomic_DNA"/>
</dbReference>
<dbReference type="RefSeq" id="NP_970618.1">
    <property type="nucleotide sequence ID" value="NC_002967.9"/>
</dbReference>
<dbReference type="RefSeq" id="WP_002680852.1">
    <property type="nucleotide sequence ID" value="NC_002967.9"/>
</dbReference>
<dbReference type="SMR" id="O87546"/>
<dbReference type="STRING" id="243275.TDE_0001"/>
<dbReference type="PaxDb" id="243275-TDE_0001"/>
<dbReference type="GeneID" id="2741619"/>
<dbReference type="KEGG" id="tde:TDE_0001"/>
<dbReference type="PATRIC" id="fig|243275.7.peg.1"/>
<dbReference type="eggNOG" id="COG0593">
    <property type="taxonomic scope" value="Bacteria"/>
</dbReference>
<dbReference type="HOGENOM" id="CLU_026910_3_1_12"/>
<dbReference type="OrthoDB" id="9807019at2"/>
<dbReference type="Proteomes" id="UP000008212">
    <property type="component" value="Chromosome"/>
</dbReference>
<dbReference type="GO" id="GO:0005737">
    <property type="term" value="C:cytoplasm"/>
    <property type="evidence" value="ECO:0007669"/>
    <property type="project" value="UniProtKB-SubCell"/>
</dbReference>
<dbReference type="GO" id="GO:0005886">
    <property type="term" value="C:plasma membrane"/>
    <property type="evidence" value="ECO:0007669"/>
    <property type="project" value="TreeGrafter"/>
</dbReference>
<dbReference type="GO" id="GO:0005524">
    <property type="term" value="F:ATP binding"/>
    <property type="evidence" value="ECO:0007669"/>
    <property type="project" value="UniProtKB-UniRule"/>
</dbReference>
<dbReference type="GO" id="GO:0016887">
    <property type="term" value="F:ATP hydrolysis activity"/>
    <property type="evidence" value="ECO:0007669"/>
    <property type="project" value="InterPro"/>
</dbReference>
<dbReference type="GO" id="GO:0003688">
    <property type="term" value="F:DNA replication origin binding"/>
    <property type="evidence" value="ECO:0007669"/>
    <property type="project" value="UniProtKB-UniRule"/>
</dbReference>
<dbReference type="GO" id="GO:0008289">
    <property type="term" value="F:lipid binding"/>
    <property type="evidence" value="ECO:0007669"/>
    <property type="project" value="UniProtKB-KW"/>
</dbReference>
<dbReference type="GO" id="GO:0006270">
    <property type="term" value="P:DNA replication initiation"/>
    <property type="evidence" value="ECO:0007669"/>
    <property type="project" value="UniProtKB-UniRule"/>
</dbReference>
<dbReference type="GO" id="GO:0006275">
    <property type="term" value="P:regulation of DNA replication"/>
    <property type="evidence" value="ECO:0007669"/>
    <property type="project" value="UniProtKB-UniRule"/>
</dbReference>
<dbReference type="CDD" id="cd00009">
    <property type="entry name" value="AAA"/>
    <property type="match status" value="1"/>
</dbReference>
<dbReference type="CDD" id="cd06571">
    <property type="entry name" value="Bac_DnaA_C"/>
    <property type="match status" value="1"/>
</dbReference>
<dbReference type="FunFam" id="3.40.50.300:FF:000668">
    <property type="entry name" value="Chromosomal replication initiator protein DnaA"/>
    <property type="match status" value="1"/>
</dbReference>
<dbReference type="Gene3D" id="1.10.1750.10">
    <property type="match status" value="1"/>
</dbReference>
<dbReference type="Gene3D" id="1.10.8.60">
    <property type="match status" value="1"/>
</dbReference>
<dbReference type="Gene3D" id="3.30.300.180">
    <property type="match status" value="1"/>
</dbReference>
<dbReference type="Gene3D" id="3.40.50.300">
    <property type="entry name" value="P-loop containing nucleotide triphosphate hydrolases"/>
    <property type="match status" value="1"/>
</dbReference>
<dbReference type="HAMAP" id="MF_00377">
    <property type="entry name" value="DnaA_bact"/>
    <property type="match status" value="1"/>
</dbReference>
<dbReference type="InterPro" id="IPR003593">
    <property type="entry name" value="AAA+_ATPase"/>
</dbReference>
<dbReference type="InterPro" id="IPR001957">
    <property type="entry name" value="Chromosome_initiator_DnaA"/>
</dbReference>
<dbReference type="InterPro" id="IPR020591">
    <property type="entry name" value="Chromosome_initiator_DnaA-like"/>
</dbReference>
<dbReference type="InterPro" id="IPR018312">
    <property type="entry name" value="Chromosome_initiator_DnaA_CS"/>
</dbReference>
<dbReference type="InterPro" id="IPR013159">
    <property type="entry name" value="DnaA_C"/>
</dbReference>
<dbReference type="InterPro" id="IPR013317">
    <property type="entry name" value="DnaA_dom"/>
</dbReference>
<dbReference type="InterPro" id="IPR024633">
    <property type="entry name" value="DnaA_N_dom"/>
</dbReference>
<dbReference type="InterPro" id="IPR038454">
    <property type="entry name" value="DnaA_N_sf"/>
</dbReference>
<dbReference type="InterPro" id="IPR027417">
    <property type="entry name" value="P-loop_NTPase"/>
</dbReference>
<dbReference type="InterPro" id="IPR010921">
    <property type="entry name" value="Trp_repressor/repl_initiator"/>
</dbReference>
<dbReference type="NCBIfam" id="TIGR00362">
    <property type="entry name" value="DnaA"/>
    <property type="match status" value="1"/>
</dbReference>
<dbReference type="PANTHER" id="PTHR30050">
    <property type="entry name" value="CHROMOSOMAL REPLICATION INITIATOR PROTEIN DNAA"/>
    <property type="match status" value="1"/>
</dbReference>
<dbReference type="PANTHER" id="PTHR30050:SF2">
    <property type="entry name" value="CHROMOSOMAL REPLICATION INITIATOR PROTEIN DNAA"/>
    <property type="match status" value="1"/>
</dbReference>
<dbReference type="Pfam" id="PF00308">
    <property type="entry name" value="Bac_DnaA"/>
    <property type="match status" value="1"/>
</dbReference>
<dbReference type="Pfam" id="PF08299">
    <property type="entry name" value="Bac_DnaA_C"/>
    <property type="match status" value="1"/>
</dbReference>
<dbReference type="Pfam" id="PF11638">
    <property type="entry name" value="DnaA_N"/>
    <property type="match status" value="1"/>
</dbReference>
<dbReference type="PRINTS" id="PR00051">
    <property type="entry name" value="DNAA"/>
</dbReference>
<dbReference type="SMART" id="SM00382">
    <property type="entry name" value="AAA"/>
    <property type="match status" value="1"/>
</dbReference>
<dbReference type="SMART" id="SM00760">
    <property type="entry name" value="Bac_DnaA_C"/>
    <property type="match status" value="1"/>
</dbReference>
<dbReference type="SUPFAM" id="SSF52540">
    <property type="entry name" value="P-loop containing nucleoside triphosphate hydrolases"/>
    <property type="match status" value="1"/>
</dbReference>
<dbReference type="SUPFAM" id="SSF48295">
    <property type="entry name" value="TrpR-like"/>
    <property type="match status" value="1"/>
</dbReference>
<dbReference type="PROSITE" id="PS01008">
    <property type="entry name" value="DNAA"/>
    <property type="match status" value="1"/>
</dbReference>
<keyword id="KW-0067">ATP-binding</keyword>
<keyword id="KW-0963">Cytoplasm</keyword>
<keyword id="KW-0235">DNA replication</keyword>
<keyword id="KW-0238">DNA-binding</keyword>
<keyword id="KW-0446">Lipid-binding</keyword>
<keyword id="KW-0547">Nucleotide-binding</keyword>
<keyword id="KW-1185">Reference proteome</keyword>
<feature type="chain" id="PRO_0000114290" description="Chromosomal replication initiator protein DnaA">
    <location>
        <begin position="1"/>
        <end position="469"/>
    </location>
</feature>
<feature type="region of interest" description="Domain I, interacts with DnaA modulators" evidence="1">
    <location>
        <begin position="1"/>
        <end position="83"/>
    </location>
</feature>
<feature type="region of interest" description="Domain II" evidence="1">
    <location>
        <begin position="83"/>
        <end position="128"/>
    </location>
</feature>
<feature type="region of interest" description="Disordered" evidence="2">
    <location>
        <begin position="89"/>
        <end position="131"/>
    </location>
</feature>
<feature type="region of interest" description="Domain III, AAA+ region" evidence="1">
    <location>
        <begin position="129"/>
        <end position="344"/>
    </location>
</feature>
<feature type="region of interest" description="Domain IV, binds dsDNA" evidence="1">
    <location>
        <begin position="345"/>
        <end position="469"/>
    </location>
</feature>
<feature type="binding site" evidence="1">
    <location>
        <position position="173"/>
    </location>
    <ligand>
        <name>ATP</name>
        <dbReference type="ChEBI" id="CHEBI:30616"/>
    </ligand>
</feature>
<feature type="binding site" evidence="1">
    <location>
        <position position="175"/>
    </location>
    <ligand>
        <name>ATP</name>
        <dbReference type="ChEBI" id="CHEBI:30616"/>
    </ligand>
</feature>
<feature type="binding site" evidence="1">
    <location>
        <position position="176"/>
    </location>
    <ligand>
        <name>ATP</name>
        <dbReference type="ChEBI" id="CHEBI:30616"/>
    </ligand>
</feature>
<feature type="binding site" evidence="1">
    <location>
        <position position="177"/>
    </location>
    <ligand>
        <name>ATP</name>
        <dbReference type="ChEBI" id="CHEBI:30616"/>
    </ligand>
</feature>
<accession>O87546</accession>